<name>ENTH_CITRI</name>
<proteinExistence type="inferred from homology"/>
<gene>
    <name evidence="1" type="primary">entH</name>
    <name type="ordered locus">ROD_06061</name>
</gene>
<reference key="1">
    <citation type="journal article" date="2010" name="J. Bacteriol.">
        <title>The Citrobacter rodentium genome sequence reveals convergent evolution with human pathogenic Escherichia coli.</title>
        <authorList>
            <person name="Petty N.K."/>
            <person name="Bulgin R."/>
            <person name="Crepin V.F."/>
            <person name="Cerdeno-Tarraga A.M."/>
            <person name="Schroeder G.N."/>
            <person name="Quail M.A."/>
            <person name="Lennard N."/>
            <person name="Corton C."/>
            <person name="Barron A."/>
            <person name="Clark L."/>
            <person name="Toribio A.L."/>
            <person name="Parkhill J."/>
            <person name="Dougan G."/>
            <person name="Frankel G."/>
            <person name="Thomson N.R."/>
        </authorList>
    </citation>
    <scope>NUCLEOTIDE SEQUENCE [LARGE SCALE GENOMIC DNA]</scope>
    <source>
        <strain>ICC168</strain>
    </source>
</reference>
<organism>
    <name type="scientific">Citrobacter rodentium (strain ICC168)</name>
    <name type="common">Citrobacter freundii biotype 4280</name>
    <dbReference type="NCBI Taxonomy" id="637910"/>
    <lineage>
        <taxon>Bacteria</taxon>
        <taxon>Pseudomonadati</taxon>
        <taxon>Pseudomonadota</taxon>
        <taxon>Gammaproteobacteria</taxon>
        <taxon>Enterobacterales</taxon>
        <taxon>Enterobacteriaceae</taxon>
        <taxon>Citrobacter</taxon>
    </lineage>
</organism>
<evidence type="ECO:0000255" key="1">
    <source>
        <dbReference type="HAMAP-Rule" id="MF_00907"/>
    </source>
</evidence>
<keyword id="KW-0963">Cytoplasm</keyword>
<keyword id="KW-0378">Hydrolase</keyword>
<keyword id="KW-1185">Reference proteome</keyword>
<comment type="function">
    <text evidence="1">Required for optimal enterobactin synthesis. Acts as a proofreading enzyme that prevents EntB misacylation by hydrolyzing the thioester bound existing between EntB and wrongly charged molecules.</text>
</comment>
<comment type="pathway">
    <text evidence="1">Siderophore biosynthesis; enterobactin biosynthesis.</text>
</comment>
<comment type="subunit">
    <text evidence="1">Homotetramer. Dimer of dimers. Interacts specifically with the aryl carrier protein (ArCP) domain of EntB.</text>
</comment>
<comment type="subcellular location">
    <subcellularLocation>
        <location evidence="1">Cytoplasm</location>
    </subcellularLocation>
</comment>
<comment type="similarity">
    <text evidence="1">Belongs to the thioesterase PaaI family.</text>
</comment>
<sequence length="138" mass="14992">MMIWKRHLTLAELNATSQNTMVAHLGIVYTRLGDDVLEAEMPVDSRTHQPFGLLHGGASAALAETLGSMAGFLLTRDGQCVVGTELNATHHRPVSQGKVRGVCQPLHLGRQSQSWEIVVFDEQGRRCCTCRLGTAVIG</sequence>
<feature type="chain" id="PRO_0000413863" description="Proofreading thioesterase EntH">
    <location>
        <begin position="1"/>
        <end position="138"/>
    </location>
</feature>
<feature type="active site" description="Nucleophile or proton acceptor" evidence="1">
    <location>
        <position position="64"/>
    </location>
</feature>
<dbReference type="EC" id="3.1.2.-" evidence="1"/>
<dbReference type="EMBL" id="FN543502">
    <property type="protein sequence ID" value="CBG87381.1"/>
    <property type="molecule type" value="Genomic_DNA"/>
</dbReference>
<dbReference type="SMR" id="D2TMN6"/>
<dbReference type="STRING" id="637910.ROD_06061"/>
<dbReference type="KEGG" id="cro:ROD_06061"/>
<dbReference type="eggNOG" id="COG2050">
    <property type="taxonomic scope" value="Bacteria"/>
</dbReference>
<dbReference type="HOGENOM" id="CLU_089876_13_1_6"/>
<dbReference type="UniPathway" id="UPA00017"/>
<dbReference type="Proteomes" id="UP000001889">
    <property type="component" value="Chromosome"/>
</dbReference>
<dbReference type="GO" id="GO:0005829">
    <property type="term" value="C:cytosol"/>
    <property type="evidence" value="ECO:0007669"/>
    <property type="project" value="TreeGrafter"/>
</dbReference>
<dbReference type="GO" id="GO:0061522">
    <property type="term" value="F:1,4-dihydroxy-2-naphthoyl-CoA thioesterase activity"/>
    <property type="evidence" value="ECO:0007669"/>
    <property type="project" value="TreeGrafter"/>
</dbReference>
<dbReference type="GO" id="GO:0009239">
    <property type="term" value="P:enterobactin biosynthetic process"/>
    <property type="evidence" value="ECO:0007669"/>
    <property type="project" value="UniProtKB-UniRule"/>
</dbReference>
<dbReference type="CDD" id="cd03443">
    <property type="entry name" value="PaaI_thioesterase"/>
    <property type="match status" value="1"/>
</dbReference>
<dbReference type="FunFam" id="3.10.129.10:FF:000002">
    <property type="entry name" value="1,4-dihydroxy-2-naphthoyl-CoA hydrolase"/>
    <property type="match status" value="1"/>
</dbReference>
<dbReference type="Gene3D" id="3.10.129.10">
    <property type="entry name" value="Hotdog Thioesterase"/>
    <property type="match status" value="1"/>
</dbReference>
<dbReference type="HAMAP" id="MF_00907">
    <property type="entry name" value="Thioesterase_EntH"/>
    <property type="match status" value="1"/>
</dbReference>
<dbReference type="InterPro" id="IPR029069">
    <property type="entry name" value="HotDog_dom_sf"/>
</dbReference>
<dbReference type="InterPro" id="IPR003736">
    <property type="entry name" value="PAAI_dom"/>
</dbReference>
<dbReference type="InterPro" id="IPR026576">
    <property type="entry name" value="Thioesterase_EntH"/>
</dbReference>
<dbReference type="InterPro" id="IPR006683">
    <property type="entry name" value="Thioestr_dom"/>
</dbReference>
<dbReference type="NCBIfam" id="NF007607">
    <property type="entry name" value="PRK10254.1"/>
    <property type="match status" value="1"/>
</dbReference>
<dbReference type="NCBIfam" id="TIGR00369">
    <property type="entry name" value="unchar_dom_1"/>
    <property type="match status" value="1"/>
</dbReference>
<dbReference type="PANTHER" id="PTHR43240">
    <property type="entry name" value="1,4-DIHYDROXY-2-NAPHTHOYL-COA THIOESTERASE 1"/>
    <property type="match status" value="1"/>
</dbReference>
<dbReference type="PANTHER" id="PTHR43240:SF9">
    <property type="entry name" value="PROOFREADING THIOESTERASE ENTH"/>
    <property type="match status" value="1"/>
</dbReference>
<dbReference type="Pfam" id="PF03061">
    <property type="entry name" value="4HBT"/>
    <property type="match status" value="1"/>
</dbReference>
<dbReference type="SUPFAM" id="SSF54637">
    <property type="entry name" value="Thioesterase/thiol ester dehydrase-isomerase"/>
    <property type="match status" value="1"/>
</dbReference>
<protein>
    <recommendedName>
        <fullName evidence="1">Proofreading thioesterase EntH</fullName>
        <ecNumber evidence="1">3.1.2.-</ecNumber>
    </recommendedName>
    <alternativeName>
        <fullName evidence="1">Enterobactin synthase component H</fullName>
    </alternativeName>
</protein>
<accession>D2TMN6</accession>